<reference key="1">
    <citation type="journal article" date="2002" name="Nature">
        <title>Complete genome sequence of the model actinomycete Streptomyces coelicolor A3(2).</title>
        <authorList>
            <person name="Bentley S.D."/>
            <person name="Chater K.F."/>
            <person name="Cerdeno-Tarraga A.-M."/>
            <person name="Challis G.L."/>
            <person name="Thomson N.R."/>
            <person name="James K.D."/>
            <person name="Harris D.E."/>
            <person name="Quail M.A."/>
            <person name="Kieser H."/>
            <person name="Harper D."/>
            <person name="Bateman A."/>
            <person name="Brown S."/>
            <person name="Chandra G."/>
            <person name="Chen C.W."/>
            <person name="Collins M."/>
            <person name="Cronin A."/>
            <person name="Fraser A."/>
            <person name="Goble A."/>
            <person name="Hidalgo J."/>
            <person name="Hornsby T."/>
            <person name="Howarth S."/>
            <person name="Huang C.-H."/>
            <person name="Kieser T."/>
            <person name="Larke L."/>
            <person name="Murphy L.D."/>
            <person name="Oliver K."/>
            <person name="O'Neil S."/>
            <person name="Rabbinowitsch E."/>
            <person name="Rajandream M.A."/>
            <person name="Rutherford K.M."/>
            <person name="Rutter S."/>
            <person name="Seeger K."/>
            <person name="Saunders D."/>
            <person name="Sharp S."/>
            <person name="Squares R."/>
            <person name="Squares S."/>
            <person name="Taylor K."/>
            <person name="Warren T."/>
            <person name="Wietzorrek A."/>
            <person name="Woodward J.R."/>
            <person name="Barrell B.G."/>
            <person name="Parkhill J."/>
            <person name="Hopwood D.A."/>
        </authorList>
    </citation>
    <scope>NUCLEOTIDE SEQUENCE [LARGE SCALE GENOMIC DNA]</scope>
    <source>
        <strain>ATCC BAA-471 / A3(2) / M145</strain>
    </source>
</reference>
<sequence length="37" mass="4401">MKVKPSVKKICDKCRVIRRHGRVMVICDNPRHKQRQG</sequence>
<organism>
    <name type="scientific">Streptomyces coelicolor (strain ATCC BAA-471 / A3(2) / M145)</name>
    <dbReference type="NCBI Taxonomy" id="100226"/>
    <lineage>
        <taxon>Bacteria</taxon>
        <taxon>Bacillati</taxon>
        <taxon>Actinomycetota</taxon>
        <taxon>Actinomycetes</taxon>
        <taxon>Kitasatosporales</taxon>
        <taxon>Streptomycetaceae</taxon>
        <taxon>Streptomyces</taxon>
        <taxon>Streptomyces albidoflavus group</taxon>
    </lineage>
</organism>
<dbReference type="EMBL" id="AL939121">
    <property type="protein sequence ID" value="CAA20382.1"/>
    <property type="molecule type" value="Genomic_DNA"/>
</dbReference>
<dbReference type="PIR" id="T35555">
    <property type="entry name" value="T35555"/>
</dbReference>
<dbReference type="RefSeq" id="NP_628884.1">
    <property type="nucleotide sequence ID" value="NC_003888.3"/>
</dbReference>
<dbReference type="RefSeq" id="WP_003974245.1">
    <property type="nucleotide sequence ID" value="NZ_VNID01000016.1"/>
</dbReference>
<dbReference type="SMR" id="P66301"/>
<dbReference type="FunCoup" id="P66301">
    <property type="interactions" value="73"/>
</dbReference>
<dbReference type="STRING" id="100226.gene:17762375"/>
<dbReference type="PaxDb" id="100226-SCO4726"/>
<dbReference type="GeneID" id="97462932"/>
<dbReference type="KEGG" id="sco:SCO4726"/>
<dbReference type="PATRIC" id="fig|100226.15.peg.4797"/>
<dbReference type="eggNOG" id="COG0257">
    <property type="taxonomic scope" value="Bacteria"/>
</dbReference>
<dbReference type="HOGENOM" id="CLU_135723_6_2_11"/>
<dbReference type="InParanoid" id="P66301"/>
<dbReference type="OrthoDB" id="9802520at2"/>
<dbReference type="PhylomeDB" id="P66301"/>
<dbReference type="PRO" id="PR:P66301"/>
<dbReference type="Proteomes" id="UP000001973">
    <property type="component" value="Chromosome"/>
</dbReference>
<dbReference type="GO" id="GO:0005737">
    <property type="term" value="C:cytoplasm"/>
    <property type="evidence" value="ECO:0007669"/>
    <property type="project" value="UniProtKB-ARBA"/>
</dbReference>
<dbReference type="GO" id="GO:1990904">
    <property type="term" value="C:ribonucleoprotein complex"/>
    <property type="evidence" value="ECO:0007669"/>
    <property type="project" value="UniProtKB-KW"/>
</dbReference>
<dbReference type="GO" id="GO:0005840">
    <property type="term" value="C:ribosome"/>
    <property type="evidence" value="ECO:0007669"/>
    <property type="project" value="UniProtKB-KW"/>
</dbReference>
<dbReference type="GO" id="GO:0003735">
    <property type="term" value="F:structural constituent of ribosome"/>
    <property type="evidence" value="ECO:0007669"/>
    <property type="project" value="InterPro"/>
</dbReference>
<dbReference type="GO" id="GO:0006412">
    <property type="term" value="P:translation"/>
    <property type="evidence" value="ECO:0007669"/>
    <property type="project" value="UniProtKB-UniRule"/>
</dbReference>
<dbReference type="HAMAP" id="MF_00251">
    <property type="entry name" value="Ribosomal_bL36"/>
    <property type="match status" value="1"/>
</dbReference>
<dbReference type="InterPro" id="IPR000473">
    <property type="entry name" value="Ribosomal_bL36"/>
</dbReference>
<dbReference type="InterPro" id="IPR035977">
    <property type="entry name" value="Ribosomal_bL36_sp"/>
</dbReference>
<dbReference type="NCBIfam" id="TIGR01022">
    <property type="entry name" value="rpmJ_bact"/>
    <property type="match status" value="1"/>
</dbReference>
<dbReference type="PANTHER" id="PTHR42888">
    <property type="entry name" value="50S RIBOSOMAL PROTEIN L36, CHLOROPLASTIC"/>
    <property type="match status" value="1"/>
</dbReference>
<dbReference type="PANTHER" id="PTHR42888:SF1">
    <property type="entry name" value="LARGE RIBOSOMAL SUBUNIT PROTEIN BL36C"/>
    <property type="match status" value="1"/>
</dbReference>
<dbReference type="Pfam" id="PF00444">
    <property type="entry name" value="Ribosomal_L36"/>
    <property type="match status" value="1"/>
</dbReference>
<dbReference type="SUPFAM" id="SSF57840">
    <property type="entry name" value="Ribosomal protein L36"/>
    <property type="match status" value="1"/>
</dbReference>
<dbReference type="PROSITE" id="PS00828">
    <property type="entry name" value="RIBOSOMAL_L36"/>
    <property type="match status" value="1"/>
</dbReference>
<evidence type="ECO:0000255" key="1">
    <source>
        <dbReference type="HAMAP-Rule" id="MF_00251"/>
    </source>
</evidence>
<evidence type="ECO:0000305" key="2"/>
<protein>
    <recommendedName>
        <fullName evidence="1">Large ribosomal subunit protein bL36A</fullName>
    </recommendedName>
    <alternativeName>
        <fullName evidence="2">50S ribosomal protein L36 1</fullName>
    </alternativeName>
</protein>
<name>RL361_STRCO</name>
<gene>
    <name evidence="1" type="primary">rpmJ1</name>
    <name type="synonym">rpmJ</name>
    <name type="ordered locus">SCO4726</name>
    <name type="ORF">SC6G4.04</name>
</gene>
<accession>P66301</accession>
<accession>O86772</accession>
<comment type="similarity">
    <text evidence="1">Belongs to the bacterial ribosomal protein bL36 family.</text>
</comment>
<keyword id="KW-1185">Reference proteome</keyword>
<keyword id="KW-0687">Ribonucleoprotein</keyword>
<keyword id="KW-0689">Ribosomal protein</keyword>
<feature type="chain" id="PRO_0000126266" description="Large ribosomal subunit protein bL36A">
    <location>
        <begin position="1"/>
        <end position="37"/>
    </location>
</feature>
<proteinExistence type="inferred from homology"/>